<evidence type="ECO:0000250" key="1">
    <source>
        <dbReference type="UniProtKB" id="A2V735"/>
    </source>
</evidence>
<evidence type="ECO:0000250" key="2">
    <source>
        <dbReference type="UniProtKB" id="Q22866"/>
    </source>
</evidence>
<evidence type="ECO:0000255" key="3"/>
<evidence type="ECO:0000269" key="4">
    <source>
    </source>
</evidence>
<evidence type="ECO:0000303" key="5">
    <source>
    </source>
</evidence>
<evidence type="ECO:0000305" key="6"/>
<evidence type="ECO:0000312" key="7">
    <source>
        <dbReference type="EMBL" id="ABU53681.1"/>
    </source>
</evidence>
<dbReference type="EMBL" id="EU082209">
    <property type="protein sequence ID" value="ABU53681.1"/>
    <property type="molecule type" value="mRNA"/>
</dbReference>
<dbReference type="SMR" id="A7UMC0"/>
<dbReference type="Allergome" id="3992">
    <property type="allergen name" value="Sin c 1"/>
</dbReference>
<dbReference type="GO" id="GO:0042803">
    <property type="term" value="F:protein homodimerization activity"/>
    <property type="evidence" value="ECO:0000250"/>
    <property type="project" value="UniProtKB"/>
</dbReference>
<dbReference type="GO" id="GO:0006937">
    <property type="term" value="P:regulation of muscle contraction"/>
    <property type="evidence" value="ECO:0000250"/>
    <property type="project" value="UniProtKB"/>
</dbReference>
<dbReference type="FunFam" id="1.20.5.170:FF:000005">
    <property type="entry name" value="Tropomyosin alpha-1 chain"/>
    <property type="match status" value="1"/>
</dbReference>
<dbReference type="FunFam" id="1.20.5.170:FF:000001">
    <property type="entry name" value="Tropomyosin alpha-1 chain isoform 1"/>
    <property type="match status" value="1"/>
</dbReference>
<dbReference type="FunFam" id="1.20.5.340:FF:000001">
    <property type="entry name" value="Tropomyosin alpha-1 chain isoform 2"/>
    <property type="match status" value="1"/>
</dbReference>
<dbReference type="Gene3D" id="1.20.5.170">
    <property type="match status" value="2"/>
</dbReference>
<dbReference type="Gene3D" id="1.20.5.340">
    <property type="match status" value="1"/>
</dbReference>
<dbReference type="InterPro" id="IPR000533">
    <property type="entry name" value="Tropomyosin"/>
</dbReference>
<dbReference type="PANTHER" id="PTHR19269">
    <property type="entry name" value="TROPOMYOSIN"/>
    <property type="match status" value="1"/>
</dbReference>
<dbReference type="Pfam" id="PF00261">
    <property type="entry name" value="Tropomyosin"/>
    <property type="match status" value="1"/>
</dbReference>
<dbReference type="PRINTS" id="PR00194">
    <property type="entry name" value="TROPOMYOSIN"/>
</dbReference>
<dbReference type="SUPFAM" id="SSF57997">
    <property type="entry name" value="Tropomyosin"/>
    <property type="match status" value="1"/>
</dbReference>
<proteinExistence type="evidence at protein level"/>
<organism evidence="7">
    <name type="scientific">Sinonovacula constricta</name>
    <name type="common">Razor clam</name>
    <dbReference type="NCBI Taxonomy" id="98310"/>
    <lineage>
        <taxon>Eukaryota</taxon>
        <taxon>Metazoa</taxon>
        <taxon>Spiralia</taxon>
        <taxon>Lophotrochozoa</taxon>
        <taxon>Mollusca</taxon>
        <taxon>Bivalvia</taxon>
        <taxon>Autobranchia</taxon>
        <taxon>Heteroconchia</taxon>
        <taxon>Euheterodonta</taxon>
        <taxon>Imparidentia</taxon>
        <taxon>Neoheterodontei</taxon>
        <taxon>Cardiida</taxon>
        <taxon>Tellinoidea</taxon>
        <taxon>Solecurtidae</taxon>
        <taxon>Sinonovacula</taxon>
    </lineage>
</organism>
<comment type="function">
    <text evidence="2">Tropomyosin, in association with the troponin complex, plays a central role in the calcium dependent regulation of muscle contraction.</text>
</comment>
<comment type="subunit">
    <text evidence="1">Homodimer.</text>
</comment>
<comment type="domain">
    <text evidence="6">The molecule is in a coiled coil structure that is formed by 2 polypeptide chains. The sequence exhibits a prominent seven-residues periodicity.</text>
</comment>
<comment type="allergen">
    <text evidence="4">Causes an allergic reaction in human. Binds to IgE in 36% of the 11 patients tested allergic to mollusk S.constricta.</text>
</comment>
<comment type="similarity">
    <text evidence="6">Belongs to the tropomyosin family.</text>
</comment>
<protein>
    <recommendedName>
        <fullName evidence="5">Tropomyosin</fullName>
    </recommendedName>
    <alternativeName>
        <fullName evidence="6">Allergen Sin c 1</fullName>
    </alternativeName>
    <allergenName evidence="6">Sin c 1.0102</allergenName>
</protein>
<keyword id="KW-0020">Allergen</keyword>
<keyword id="KW-0175">Coiled coil</keyword>
<keyword id="KW-0514">Muscle protein</keyword>
<keyword id="KW-0677">Repeat</keyword>
<accession>A7UMC0</accession>
<sequence length="284" mass="32957">MDAIKKKMQAMKIEKENALDKSEQLENKLKEIEDVKVKIEEDLTSLQKKYTNQENEYDKVNEQFNESTVKLEASEKRVTECEDEIKGFTRRIQLLEDELERTQQKAEEAVLKLEEASKAADESERGRKVLESRSIADDDRIDKLEKDVKDSKYLAEEADRKYDEAARKLAITEVDLERAETRLEAAESKITELSEELQVVGNNCKALQNAVDQASQREDSYEETIRDLTQRLKDAENRAAEAERVVNKLQKEVDRLEDELLQEKEKYKQISDELDQTFAELAGM</sequence>
<reference evidence="7" key="1">
    <citation type="journal article" date="2009" name="Mol. Biol. Rep.">
        <title>Sequence analysis and expression of a cDNA clone encoding tropomysin in Sinonovacula constricta.</title>
        <authorList>
            <person name="Song J."/>
            <person name="Li L."/>
            <person name="Liu Z."/>
            <person name="Li Q."/>
            <person name="Ran P."/>
        </authorList>
    </citation>
    <scope>NUCLEOTIDE SEQUENCE [MRNA]</scope>
    <scope>ALLERGEN</scope>
</reference>
<feature type="chain" id="PRO_0000447295" description="Tropomyosin">
    <location>
        <begin position="1"/>
        <end position="284"/>
    </location>
</feature>
<feature type="coiled-coil region" evidence="3">
    <location>
        <begin position="1"/>
        <end position="280"/>
    </location>
</feature>
<name>TPM_SINCO</name>